<comment type="function">
    <text evidence="1">One of the proteins required for the normal export of preproteins out of the cell cytoplasm. It is a molecular chaperone that binds to a subset of precursor proteins, maintaining them in a translocation-competent state. It also specifically binds to its receptor SecA.</text>
</comment>
<comment type="subunit">
    <text evidence="1">Homotetramer, a dimer of dimers. One homotetramer interacts with 1 SecA dimer.</text>
</comment>
<comment type="subcellular location">
    <subcellularLocation>
        <location evidence="1">Cytoplasm</location>
    </subcellularLocation>
</comment>
<comment type="similarity">
    <text evidence="1">Belongs to the SecB family.</text>
</comment>
<reference key="1">
    <citation type="journal article" date="2009" name="Science">
        <title>The dynamics and time scale of ongoing genomic erosion in symbiotic bacteria.</title>
        <authorList>
            <person name="Moran N.A."/>
            <person name="McLaughlin H.J."/>
            <person name="Sorek R."/>
        </authorList>
    </citation>
    <scope>NUCLEOTIDE SEQUENCE [LARGE SCALE GENOMIC DNA]</scope>
    <source>
        <strain>5A</strain>
    </source>
</reference>
<evidence type="ECO:0000255" key="1">
    <source>
        <dbReference type="HAMAP-Rule" id="MF_00821"/>
    </source>
</evidence>
<keyword id="KW-0143">Chaperone</keyword>
<keyword id="KW-0963">Cytoplasm</keyword>
<keyword id="KW-0653">Protein transport</keyword>
<keyword id="KW-0811">Translocation</keyword>
<keyword id="KW-0813">Transport</keyword>
<proteinExistence type="inferred from homology"/>
<protein>
    <recommendedName>
        <fullName evidence="1">Protein-export protein SecB</fullName>
    </recommendedName>
</protein>
<feature type="chain" id="PRO_1000148696" description="Protein-export protein SecB">
    <location>
        <begin position="1"/>
        <end position="142"/>
    </location>
</feature>
<name>SECB_BUCA5</name>
<accession>B8D8L1</accession>
<gene>
    <name evidence="1" type="primary">secB</name>
    <name type="ordered locus">BUAP5A_052</name>
</gene>
<dbReference type="EMBL" id="CP001161">
    <property type="protein sequence ID" value="ACL30433.1"/>
    <property type="molecule type" value="Genomic_DNA"/>
</dbReference>
<dbReference type="RefSeq" id="WP_009874010.1">
    <property type="nucleotide sequence ID" value="NC_011833.1"/>
</dbReference>
<dbReference type="SMR" id="B8D8L1"/>
<dbReference type="KEGG" id="bap:BUAP5A_052"/>
<dbReference type="HOGENOM" id="CLU_111574_1_0_6"/>
<dbReference type="OrthoDB" id="9795145at2"/>
<dbReference type="Proteomes" id="UP000006904">
    <property type="component" value="Chromosome"/>
</dbReference>
<dbReference type="GO" id="GO:0005737">
    <property type="term" value="C:cytoplasm"/>
    <property type="evidence" value="ECO:0007669"/>
    <property type="project" value="UniProtKB-SubCell"/>
</dbReference>
<dbReference type="GO" id="GO:0051082">
    <property type="term" value="F:unfolded protein binding"/>
    <property type="evidence" value="ECO:0007669"/>
    <property type="project" value="InterPro"/>
</dbReference>
<dbReference type="GO" id="GO:0006457">
    <property type="term" value="P:protein folding"/>
    <property type="evidence" value="ECO:0007669"/>
    <property type="project" value="UniProtKB-UniRule"/>
</dbReference>
<dbReference type="GO" id="GO:0051262">
    <property type="term" value="P:protein tetramerization"/>
    <property type="evidence" value="ECO:0007669"/>
    <property type="project" value="InterPro"/>
</dbReference>
<dbReference type="GO" id="GO:0015031">
    <property type="term" value="P:protein transport"/>
    <property type="evidence" value="ECO:0007669"/>
    <property type="project" value="UniProtKB-UniRule"/>
</dbReference>
<dbReference type="Gene3D" id="3.10.420.10">
    <property type="entry name" value="SecB-like"/>
    <property type="match status" value="1"/>
</dbReference>
<dbReference type="HAMAP" id="MF_00821">
    <property type="entry name" value="SecB"/>
    <property type="match status" value="1"/>
</dbReference>
<dbReference type="InterPro" id="IPR003708">
    <property type="entry name" value="SecB"/>
</dbReference>
<dbReference type="InterPro" id="IPR035958">
    <property type="entry name" value="SecB-like_sf"/>
</dbReference>
<dbReference type="NCBIfam" id="NF004393">
    <property type="entry name" value="PRK05751.1-4"/>
    <property type="match status" value="1"/>
</dbReference>
<dbReference type="NCBIfam" id="TIGR00809">
    <property type="entry name" value="secB"/>
    <property type="match status" value="1"/>
</dbReference>
<dbReference type="PANTHER" id="PTHR36918">
    <property type="match status" value="1"/>
</dbReference>
<dbReference type="PANTHER" id="PTHR36918:SF1">
    <property type="entry name" value="PROTEIN-EXPORT PROTEIN SECB"/>
    <property type="match status" value="1"/>
</dbReference>
<dbReference type="Pfam" id="PF02556">
    <property type="entry name" value="SecB"/>
    <property type="match status" value="1"/>
</dbReference>
<dbReference type="PRINTS" id="PR01594">
    <property type="entry name" value="SECBCHAPRONE"/>
</dbReference>
<dbReference type="SUPFAM" id="SSF54611">
    <property type="entry name" value="SecB-like"/>
    <property type="match status" value="1"/>
</dbReference>
<sequence length="142" mass="16571">MLEEKKKQESFEIQRIYIKDVSFEAPNTPNIFHVNWIPTIKLNLNTTTKKIKENIFEVVLMVKVTVKIKEDLVFLCDIDQAGIFFIANINEKRLKHCLYSYCPNILFPYARTCISNLVSCGSFPQMNLAPINFDALYHDHIK</sequence>
<organism>
    <name type="scientific">Buchnera aphidicola subsp. Acyrthosiphon pisum (strain 5A)</name>
    <dbReference type="NCBI Taxonomy" id="563178"/>
    <lineage>
        <taxon>Bacteria</taxon>
        <taxon>Pseudomonadati</taxon>
        <taxon>Pseudomonadota</taxon>
        <taxon>Gammaproteobacteria</taxon>
        <taxon>Enterobacterales</taxon>
        <taxon>Erwiniaceae</taxon>
        <taxon>Buchnera</taxon>
    </lineage>
</organism>